<proteinExistence type="evidence at transcript level"/>
<reference key="1">
    <citation type="journal article" date="1999" name="Nature">
        <title>Sequence and analysis of chromosome 2 of the plant Arabidopsis thaliana.</title>
        <authorList>
            <person name="Lin X."/>
            <person name="Kaul S."/>
            <person name="Rounsley S.D."/>
            <person name="Shea T.P."/>
            <person name="Benito M.-I."/>
            <person name="Town C.D."/>
            <person name="Fujii C.Y."/>
            <person name="Mason T.M."/>
            <person name="Bowman C.L."/>
            <person name="Barnstead M.E."/>
            <person name="Feldblyum T.V."/>
            <person name="Buell C.R."/>
            <person name="Ketchum K.A."/>
            <person name="Lee J.J."/>
            <person name="Ronning C.M."/>
            <person name="Koo H.L."/>
            <person name="Moffat K.S."/>
            <person name="Cronin L.A."/>
            <person name="Shen M."/>
            <person name="Pai G."/>
            <person name="Van Aken S."/>
            <person name="Umayam L."/>
            <person name="Tallon L.J."/>
            <person name="Gill J.E."/>
            <person name="Adams M.D."/>
            <person name="Carrera A.J."/>
            <person name="Creasy T.H."/>
            <person name="Goodman H.M."/>
            <person name="Somerville C.R."/>
            <person name="Copenhaver G.P."/>
            <person name="Preuss D."/>
            <person name="Nierman W.C."/>
            <person name="White O."/>
            <person name="Eisen J.A."/>
            <person name="Salzberg S.L."/>
            <person name="Fraser C.M."/>
            <person name="Venter J.C."/>
        </authorList>
    </citation>
    <scope>NUCLEOTIDE SEQUENCE [LARGE SCALE GENOMIC DNA]</scope>
    <source>
        <strain>cv. Columbia</strain>
    </source>
</reference>
<reference key="2">
    <citation type="journal article" date="2017" name="Plant J.">
        <title>Araport11: a complete reannotation of the Arabidopsis thaliana reference genome.</title>
        <authorList>
            <person name="Cheng C.Y."/>
            <person name="Krishnakumar V."/>
            <person name="Chan A.P."/>
            <person name="Thibaud-Nissen F."/>
            <person name="Schobel S."/>
            <person name="Town C.D."/>
        </authorList>
    </citation>
    <scope>GENOME REANNOTATION</scope>
    <source>
        <strain>cv. Columbia</strain>
    </source>
</reference>
<reference key="3">
    <citation type="journal article" date="2003" name="Science">
        <title>Empirical analysis of transcriptional activity in the Arabidopsis genome.</title>
        <authorList>
            <person name="Yamada K."/>
            <person name="Lim J."/>
            <person name="Dale J.M."/>
            <person name="Chen H."/>
            <person name="Shinn P."/>
            <person name="Palm C.J."/>
            <person name="Southwick A.M."/>
            <person name="Wu H.C."/>
            <person name="Kim C.J."/>
            <person name="Nguyen M."/>
            <person name="Pham P.K."/>
            <person name="Cheuk R.F."/>
            <person name="Karlin-Newmann G."/>
            <person name="Liu S.X."/>
            <person name="Lam B."/>
            <person name="Sakano H."/>
            <person name="Wu T."/>
            <person name="Yu G."/>
            <person name="Miranda M."/>
            <person name="Quach H.L."/>
            <person name="Tripp M."/>
            <person name="Chang C.H."/>
            <person name="Lee J.M."/>
            <person name="Toriumi M.J."/>
            <person name="Chan M.M."/>
            <person name="Tang C.C."/>
            <person name="Onodera C.S."/>
            <person name="Deng J.M."/>
            <person name="Akiyama K."/>
            <person name="Ansari Y."/>
            <person name="Arakawa T."/>
            <person name="Banh J."/>
            <person name="Banno F."/>
            <person name="Bowser L."/>
            <person name="Brooks S.Y."/>
            <person name="Carninci P."/>
            <person name="Chao Q."/>
            <person name="Choy N."/>
            <person name="Enju A."/>
            <person name="Goldsmith A.D."/>
            <person name="Gurjal M."/>
            <person name="Hansen N.F."/>
            <person name="Hayashizaki Y."/>
            <person name="Johnson-Hopson C."/>
            <person name="Hsuan V.W."/>
            <person name="Iida K."/>
            <person name="Karnes M."/>
            <person name="Khan S."/>
            <person name="Koesema E."/>
            <person name="Ishida J."/>
            <person name="Jiang P.X."/>
            <person name="Jones T."/>
            <person name="Kawai J."/>
            <person name="Kamiya A."/>
            <person name="Meyers C."/>
            <person name="Nakajima M."/>
            <person name="Narusaka M."/>
            <person name="Seki M."/>
            <person name="Sakurai T."/>
            <person name="Satou M."/>
            <person name="Tamse R."/>
            <person name="Vaysberg M."/>
            <person name="Wallender E.K."/>
            <person name="Wong C."/>
            <person name="Yamamura Y."/>
            <person name="Yuan S."/>
            <person name="Shinozaki K."/>
            <person name="Davis R.W."/>
            <person name="Theologis A."/>
            <person name="Ecker J.R."/>
        </authorList>
    </citation>
    <scope>NUCLEOTIDE SEQUENCE [LARGE SCALE MRNA]</scope>
    <source>
        <strain>cv. Columbia</strain>
    </source>
</reference>
<reference key="4">
    <citation type="journal article" date="2002" name="Plant Mol. Biol.">
        <title>Auxin-responsive gene expression: genes, promoters and regulatory factors.</title>
        <authorList>
            <person name="Hagen G."/>
            <person name="Guilfoyle T.J."/>
        </authorList>
    </citation>
    <scope>GENE FAMILY</scope>
    <scope>NOMENCLATURE</scope>
</reference>
<reference key="5">
    <citation type="journal article" date="2003" name="Plant J.">
        <title>Large-scale identification of leaf senescence-associated genes.</title>
        <authorList>
            <person name="Gepstein S."/>
            <person name="Sabehi G."/>
            <person name="Carp M.-J."/>
            <person name="Hajouj T."/>
            <person name="Nesher M.F.O."/>
            <person name="Yariv I."/>
            <person name="Dor C."/>
            <person name="Bassani M."/>
        </authorList>
    </citation>
    <scope>INDUCTION BY SENESCENCE</scope>
</reference>
<reference key="6">
    <citation type="journal article" date="2013" name="Plant Physiol.">
        <title>SAUR36, a small auxin up RNA gene, is involved in the promotion of leaf senescence in Arabidopsis.</title>
        <authorList>
            <person name="Hou K."/>
            <person name="Wu W."/>
            <person name="Gan S.S."/>
        </authorList>
    </citation>
    <scope>FUNCTION</scope>
    <scope>INDUCTION</scope>
    <scope>DISRUPTION PHENOTYPE</scope>
</reference>
<reference key="7">
    <citation type="journal article" date="2013" name="Plant Cell Rep.">
        <title>Auxin and gibberellin responsive Arabidopsis SMALL AUXIN UP RNA36 regulates hypocotyl elongation in the light.</title>
        <authorList>
            <person name="Stamm P."/>
            <person name="Kumar P.P."/>
        </authorList>
    </citation>
    <scope>FUNCTION</scope>
    <scope>TISSUE SPECIFICITY</scope>
    <scope>INDUCTION</scope>
</reference>
<feature type="chain" id="PRO_0000433068" description="Auxin-responsive protein SAUR36">
    <location>
        <begin position="1"/>
        <end position="162"/>
    </location>
</feature>
<gene>
    <name evidence="4" type="primary">SAUR36</name>
    <name evidence="5" type="synonym">RAG1</name>
    <name evidence="6" type="synonym">SAG201</name>
    <name evidence="7" type="ordered locus">At2g45210</name>
</gene>
<organism>
    <name type="scientific">Arabidopsis thaliana</name>
    <name type="common">Mouse-ear cress</name>
    <dbReference type="NCBI Taxonomy" id="3702"/>
    <lineage>
        <taxon>Eukaryota</taxon>
        <taxon>Viridiplantae</taxon>
        <taxon>Streptophyta</taxon>
        <taxon>Embryophyta</taxon>
        <taxon>Tracheophyta</taxon>
        <taxon>Spermatophyta</taxon>
        <taxon>Magnoliopsida</taxon>
        <taxon>eudicotyledons</taxon>
        <taxon>Gunneridae</taxon>
        <taxon>Pentapetalae</taxon>
        <taxon>rosids</taxon>
        <taxon>malvids</taxon>
        <taxon>Brassicales</taxon>
        <taxon>Brassicaceae</taxon>
        <taxon>Camelineae</taxon>
        <taxon>Arabidopsis</taxon>
    </lineage>
</organism>
<sequence>MRKIIGFRIGRRVSRWIFRKTRIQRSGYNRIHSTQQACMLMRPLAKLKSWGQRLKQSFRRRSTRRSAYIPVDHKKADPVPRGHLAIYVGQKDGDCHRVLVPIVYFNHPLFGELLREAEKEYGFCHEGGITIPCLYSDFERVKTRIASGSSSRVFPWGRHCRN</sequence>
<name>SAU36_ARATH</name>
<keyword id="KW-0927">Auxin signaling pathway</keyword>
<keyword id="KW-0217">Developmental protein</keyword>
<keyword id="KW-0341">Growth regulation</keyword>
<keyword id="KW-1185">Reference proteome</keyword>
<dbReference type="EMBL" id="AC002387">
    <property type="protein sequence ID" value="AAB82641.1"/>
    <property type="molecule type" value="Genomic_DNA"/>
</dbReference>
<dbReference type="EMBL" id="CP002685">
    <property type="protein sequence ID" value="AEC10526.1"/>
    <property type="molecule type" value="Genomic_DNA"/>
</dbReference>
<dbReference type="EMBL" id="BT002787">
    <property type="protein sequence ID" value="AAO22615.1"/>
    <property type="molecule type" value="mRNA"/>
</dbReference>
<dbReference type="EMBL" id="BT004357">
    <property type="protein sequence ID" value="AAO42351.1"/>
    <property type="molecule type" value="mRNA"/>
</dbReference>
<dbReference type="PIR" id="G84887">
    <property type="entry name" value="G84887"/>
</dbReference>
<dbReference type="RefSeq" id="NP_182046.1">
    <property type="nucleotide sequence ID" value="NM_130084.3"/>
</dbReference>
<dbReference type="FunCoup" id="O22150">
    <property type="interactions" value="425"/>
</dbReference>
<dbReference type="STRING" id="3702.O22150"/>
<dbReference type="PaxDb" id="3702-AT2G45210.1"/>
<dbReference type="EnsemblPlants" id="AT2G45210.1">
    <property type="protein sequence ID" value="AT2G45210.1"/>
    <property type="gene ID" value="AT2G45210"/>
</dbReference>
<dbReference type="GeneID" id="819129"/>
<dbReference type="Gramene" id="AT2G45210.1">
    <property type="protein sequence ID" value="AT2G45210.1"/>
    <property type="gene ID" value="AT2G45210"/>
</dbReference>
<dbReference type="KEGG" id="ath:AT2G45210"/>
<dbReference type="Araport" id="AT2G45210"/>
<dbReference type="TAIR" id="AT2G45210">
    <property type="gene designation" value="SAUR36"/>
</dbReference>
<dbReference type="eggNOG" id="ENOG502S3J8">
    <property type="taxonomic scope" value="Eukaryota"/>
</dbReference>
<dbReference type="HOGENOM" id="CLU_115169_0_0_1"/>
<dbReference type="InParanoid" id="O22150"/>
<dbReference type="OMA" id="GFCHEGG"/>
<dbReference type="OrthoDB" id="1026046at2759"/>
<dbReference type="PhylomeDB" id="O22150"/>
<dbReference type="PRO" id="PR:O22150"/>
<dbReference type="Proteomes" id="UP000006548">
    <property type="component" value="Chromosome 2"/>
</dbReference>
<dbReference type="ExpressionAtlas" id="O22150">
    <property type="expression patterns" value="baseline and differential"/>
</dbReference>
<dbReference type="GO" id="GO:0005634">
    <property type="term" value="C:nucleus"/>
    <property type="evidence" value="ECO:0007005"/>
    <property type="project" value="TAIR"/>
</dbReference>
<dbReference type="GO" id="GO:0009734">
    <property type="term" value="P:auxin-activated signaling pathway"/>
    <property type="evidence" value="ECO:0007669"/>
    <property type="project" value="UniProtKB-KW"/>
</dbReference>
<dbReference type="GO" id="GO:1900057">
    <property type="term" value="P:positive regulation of leaf senescence"/>
    <property type="evidence" value="ECO:0000315"/>
    <property type="project" value="TAIR"/>
</dbReference>
<dbReference type="GO" id="GO:0010029">
    <property type="term" value="P:regulation of seed germination"/>
    <property type="evidence" value="ECO:0000314"/>
    <property type="project" value="UniProtKB"/>
</dbReference>
<dbReference type="InterPro" id="IPR003676">
    <property type="entry name" value="SAUR_fam"/>
</dbReference>
<dbReference type="PANTHER" id="PTHR31374">
    <property type="entry name" value="AUXIN-INDUCED PROTEIN-LIKE-RELATED"/>
    <property type="match status" value="1"/>
</dbReference>
<dbReference type="PANTHER" id="PTHR31374:SF388">
    <property type="entry name" value="AUXIN-RESPONSIVE PROTEIN SAUR36"/>
    <property type="match status" value="1"/>
</dbReference>
<dbReference type="Pfam" id="PF02519">
    <property type="entry name" value="Auxin_inducible"/>
    <property type="match status" value="1"/>
</dbReference>
<comment type="function">
    <text evidence="2 3">Acts a positive regulator of leaf senescence and may mediate auxin-induced leaf senescence (PubMed:23250625). Plays a role in the regulation of seed germination by gibberellins and abscisic acid (ABA). Plays a role in the regulation of light-dependent hypocotyl elongation (PubMed:23503980).</text>
</comment>
<comment type="tissue specificity">
    <text evidence="3">Expressed in embryo, endosperm, growing hypocotyls and shoot apical meristems.</text>
</comment>
<comment type="induction">
    <text evidence="1 2 3">By senescence (PubMed:14617064, PubMed:23250625). Induced by auxin (PubMed:23250625, PubMed:23503980). Down-regulated by gibberellin (PubMed:23503980).</text>
</comment>
<comment type="disruption phenotype">
    <text evidence="2">Increased leaf size and delayed senescence.</text>
</comment>
<comment type="similarity">
    <text evidence="6">Belongs to the ARG7 family.</text>
</comment>
<accession>O22150</accession>
<evidence type="ECO:0000269" key="1">
    <source>
    </source>
</evidence>
<evidence type="ECO:0000269" key="2">
    <source>
    </source>
</evidence>
<evidence type="ECO:0000269" key="3">
    <source>
    </source>
</evidence>
<evidence type="ECO:0000303" key="4">
    <source>
    </source>
</evidence>
<evidence type="ECO:0000303" key="5">
    <source>
    </source>
</evidence>
<evidence type="ECO:0000305" key="6"/>
<evidence type="ECO:0000312" key="7">
    <source>
        <dbReference type="Araport" id="AT2G45210"/>
    </source>
</evidence>
<protein>
    <recommendedName>
        <fullName evidence="6">Auxin-responsive protein SAUR36</fullName>
    </recommendedName>
    <alternativeName>
        <fullName evidence="5">Protein RESPONSE TO AUXINS AND GIBBERELLINS 1</fullName>
    </alternativeName>
    <alternativeName>
        <fullName evidence="6">Protein SENESCENCE-ASSOCIATED GENE 201</fullName>
    </alternativeName>
    <alternativeName>
        <fullName evidence="4">Protein SMALL AUXIN UP RNA 36</fullName>
    </alternativeName>
</protein>